<sequence>MKEIEKLKEEYPLLNKLIATEEVFWVNPNMEKYETAIKDSPLSEENVKDAEERLKRFASYIAKVFPETKETKGIIESPLLKIPSMKQALEKNYEQPILGELLLKCDSHLPISGSIKARGGIYEVLKHAEQLALQHGMLTEEDNYAILDSDTCREFFATYSIAVGSTGNLGLSIGIMSAKLGFNVTVHMSADAKQWKKDLLRSKGVNVIEYEADYSKAVEEGRRQADADPSCYFVDDENSHDLFLGYAVAASRLQKQLEELKIVVDEEHPLFVYLPCGVGGGPGGVAFGLKLLYKDNVHCFFAEPTHSPCMLIGLMTGLHDKIAVQDIGIDNVTDADGLAVGRPSGFVGKTMEPFLSGNYTVSDEELYRLLKELADTENIYLEPSALAGMIGPVKVCKEDAYLQKQQLMEKVQKGTHIVWGTGGSMVPEDVMNGYYKTGEALTILEK</sequence>
<feature type="chain" id="PRO_0000185605" description="Probable D-serine dehydratase">
    <location>
        <begin position="1"/>
        <end position="446"/>
    </location>
</feature>
<feature type="modified residue" description="N6-(pyridoxal phosphate)lysine" evidence="1">
    <location>
        <position position="116"/>
    </location>
</feature>
<protein>
    <recommendedName>
        <fullName evidence="1">Probable D-serine dehydratase</fullName>
        <ecNumber evidence="1">4.3.1.18</ecNumber>
    </recommendedName>
    <alternativeName>
        <fullName evidence="1">D-serine deaminase</fullName>
        <shortName evidence="1">DSD</shortName>
    </alternativeName>
</protein>
<gene>
    <name evidence="1" type="primary">dsdA</name>
    <name type="ordered locus">BT9727_1631</name>
</gene>
<evidence type="ECO:0000255" key="1">
    <source>
        <dbReference type="HAMAP-Rule" id="MF_01030"/>
    </source>
</evidence>
<keyword id="KW-0456">Lyase</keyword>
<keyword id="KW-0663">Pyridoxal phosphate</keyword>
<name>SDHD_BACHK</name>
<accession>Q6HKG3</accession>
<proteinExistence type="inferred from homology"/>
<comment type="catalytic activity">
    <reaction evidence="1">
        <text>D-serine = pyruvate + NH4(+)</text>
        <dbReference type="Rhea" id="RHEA:13977"/>
        <dbReference type="ChEBI" id="CHEBI:15361"/>
        <dbReference type="ChEBI" id="CHEBI:28938"/>
        <dbReference type="ChEBI" id="CHEBI:35247"/>
        <dbReference type="EC" id="4.3.1.18"/>
    </reaction>
</comment>
<comment type="cofactor">
    <cofactor evidence="1">
        <name>pyridoxal 5'-phosphate</name>
        <dbReference type="ChEBI" id="CHEBI:597326"/>
    </cofactor>
</comment>
<comment type="similarity">
    <text evidence="1">Belongs to the serine/threonine dehydratase family. DsdA subfamily.</text>
</comment>
<dbReference type="EC" id="4.3.1.18" evidence="1"/>
<dbReference type="EMBL" id="AE017355">
    <property type="protein sequence ID" value="AAT63288.1"/>
    <property type="molecule type" value="Genomic_DNA"/>
</dbReference>
<dbReference type="RefSeq" id="WP_000658347.1">
    <property type="nucleotide sequence ID" value="NC_005957.1"/>
</dbReference>
<dbReference type="RefSeq" id="YP_035963.1">
    <property type="nucleotide sequence ID" value="NC_005957.1"/>
</dbReference>
<dbReference type="SMR" id="Q6HKG3"/>
<dbReference type="KEGG" id="btk:BT9727_1631"/>
<dbReference type="PATRIC" id="fig|281309.8.peg.1717"/>
<dbReference type="HOGENOM" id="CLU_035707_0_0_9"/>
<dbReference type="Proteomes" id="UP000001301">
    <property type="component" value="Chromosome"/>
</dbReference>
<dbReference type="GO" id="GO:0008721">
    <property type="term" value="F:D-serine ammonia-lyase activity"/>
    <property type="evidence" value="ECO:0007669"/>
    <property type="project" value="UniProtKB-EC"/>
</dbReference>
<dbReference type="GO" id="GO:0016836">
    <property type="term" value="F:hydro-lyase activity"/>
    <property type="evidence" value="ECO:0007669"/>
    <property type="project" value="UniProtKB-UniRule"/>
</dbReference>
<dbReference type="GO" id="GO:0030170">
    <property type="term" value="F:pyridoxal phosphate binding"/>
    <property type="evidence" value="ECO:0007669"/>
    <property type="project" value="InterPro"/>
</dbReference>
<dbReference type="GO" id="GO:0036088">
    <property type="term" value="P:D-serine catabolic process"/>
    <property type="evidence" value="ECO:0007669"/>
    <property type="project" value="TreeGrafter"/>
</dbReference>
<dbReference type="GO" id="GO:0009097">
    <property type="term" value="P:isoleucine biosynthetic process"/>
    <property type="evidence" value="ECO:0007669"/>
    <property type="project" value="TreeGrafter"/>
</dbReference>
<dbReference type="CDD" id="cd06447">
    <property type="entry name" value="D-Ser-dehyd"/>
    <property type="match status" value="1"/>
</dbReference>
<dbReference type="FunFam" id="3.40.50.1100:FF:000018">
    <property type="entry name" value="D-serine dehydratase"/>
    <property type="match status" value="1"/>
</dbReference>
<dbReference type="Gene3D" id="3.40.50.1100">
    <property type="match status" value="2"/>
</dbReference>
<dbReference type="HAMAP" id="MF_01030">
    <property type="entry name" value="D_Ser_dehydrat"/>
    <property type="match status" value="1"/>
</dbReference>
<dbReference type="InterPro" id="IPR011780">
    <property type="entry name" value="D_Ser_am_lyase"/>
</dbReference>
<dbReference type="InterPro" id="IPR050147">
    <property type="entry name" value="Ser/Thr_Dehydratase"/>
</dbReference>
<dbReference type="InterPro" id="IPR000634">
    <property type="entry name" value="Ser/Thr_deHydtase_PyrdxlP-BS"/>
</dbReference>
<dbReference type="InterPro" id="IPR001926">
    <property type="entry name" value="TrpB-like_PALP"/>
</dbReference>
<dbReference type="InterPro" id="IPR036052">
    <property type="entry name" value="TrpB-like_PALP_sf"/>
</dbReference>
<dbReference type="NCBIfam" id="TIGR02035">
    <property type="entry name" value="D_Ser_am_lyase"/>
    <property type="match status" value="1"/>
</dbReference>
<dbReference type="NCBIfam" id="NF002823">
    <property type="entry name" value="PRK02991.1"/>
    <property type="match status" value="1"/>
</dbReference>
<dbReference type="PANTHER" id="PTHR48078:SF9">
    <property type="entry name" value="D-SERINE DEHYDRATASE"/>
    <property type="match status" value="1"/>
</dbReference>
<dbReference type="PANTHER" id="PTHR48078">
    <property type="entry name" value="THREONINE DEHYDRATASE, MITOCHONDRIAL-RELATED"/>
    <property type="match status" value="1"/>
</dbReference>
<dbReference type="Pfam" id="PF00291">
    <property type="entry name" value="PALP"/>
    <property type="match status" value="1"/>
</dbReference>
<dbReference type="SUPFAM" id="SSF53686">
    <property type="entry name" value="Tryptophan synthase beta subunit-like PLP-dependent enzymes"/>
    <property type="match status" value="1"/>
</dbReference>
<dbReference type="PROSITE" id="PS00165">
    <property type="entry name" value="DEHYDRATASE_SER_THR"/>
    <property type="match status" value="1"/>
</dbReference>
<organism>
    <name type="scientific">Bacillus thuringiensis subsp. konkukian (strain 97-27)</name>
    <dbReference type="NCBI Taxonomy" id="281309"/>
    <lineage>
        <taxon>Bacteria</taxon>
        <taxon>Bacillati</taxon>
        <taxon>Bacillota</taxon>
        <taxon>Bacilli</taxon>
        <taxon>Bacillales</taxon>
        <taxon>Bacillaceae</taxon>
        <taxon>Bacillus</taxon>
        <taxon>Bacillus cereus group</taxon>
    </lineage>
</organism>
<reference key="1">
    <citation type="journal article" date="2006" name="J. Bacteriol.">
        <title>Pathogenomic sequence analysis of Bacillus cereus and Bacillus thuringiensis isolates closely related to Bacillus anthracis.</title>
        <authorList>
            <person name="Han C.S."/>
            <person name="Xie G."/>
            <person name="Challacombe J.F."/>
            <person name="Altherr M.R."/>
            <person name="Bhotika S.S."/>
            <person name="Bruce D."/>
            <person name="Campbell C.S."/>
            <person name="Campbell M.L."/>
            <person name="Chen J."/>
            <person name="Chertkov O."/>
            <person name="Cleland C."/>
            <person name="Dimitrijevic M."/>
            <person name="Doggett N.A."/>
            <person name="Fawcett J.J."/>
            <person name="Glavina T."/>
            <person name="Goodwin L.A."/>
            <person name="Hill K.K."/>
            <person name="Hitchcock P."/>
            <person name="Jackson P.J."/>
            <person name="Keim P."/>
            <person name="Kewalramani A.R."/>
            <person name="Longmire J."/>
            <person name="Lucas S."/>
            <person name="Malfatti S."/>
            <person name="McMurry K."/>
            <person name="Meincke L.J."/>
            <person name="Misra M."/>
            <person name="Moseman B.L."/>
            <person name="Mundt M."/>
            <person name="Munk A.C."/>
            <person name="Okinaka R.T."/>
            <person name="Parson-Quintana B."/>
            <person name="Reilly L.P."/>
            <person name="Richardson P."/>
            <person name="Robinson D.L."/>
            <person name="Rubin E."/>
            <person name="Saunders E."/>
            <person name="Tapia R."/>
            <person name="Tesmer J.G."/>
            <person name="Thayer N."/>
            <person name="Thompson L.S."/>
            <person name="Tice H."/>
            <person name="Ticknor L.O."/>
            <person name="Wills P.L."/>
            <person name="Brettin T.S."/>
            <person name="Gilna P."/>
        </authorList>
    </citation>
    <scope>NUCLEOTIDE SEQUENCE [LARGE SCALE GENOMIC DNA]</scope>
    <source>
        <strain>97-27</strain>
    </source>
</reference>